<accession>P0AE96</accession>
<accession>P52105</accession>
<proteinExistence type="inferred from homology"/>
<sequence>MKRYLRWIVAAEFLFAAGNLHAVEVEVPGLLTDHTVSSIGHDFYRAFSDKWESDYTGNLTINERPSARWGSWITITVNQDVIFQTFLFPLKRDFEKTVVFALIQTEEALNRRQINQALLSTGDLAHDEF</sequence>
<name>CSGE_ECOL6</name>
<gene>
    <name type="primary">csgE</name>
    <name type="ordered locus">c1301</name>
</gene>
<dbReference type="EMBL" id="AE014075">
    <property type="protein sequence ID" value="AAN79774.1"/>
    <property type="molecule type" value="Genomic_DNA"/>
</dbReference>
<dbReference type="RefSeq" id="WP_000833288.1">
    <property type="nucleotide sequence ID" value="NZ_CP051263.1"/>
</dbReference>
<dbReference type="SMR" id="P0AE96"/>
<dbReference type="STRING" id="199310.c1301"/>
<dbReference type="GeneID" id="75203627"/>
<dbReference type="KEGG" id="ecc:c1301"/>
<dbReference type="eggNOG" id="ENOG502ZPXX">
    <property type="taxonomic scope" value="Bacteria"/>
</dbReference>
<dbReference type="HOGENOM" id="CLU_131424_0_0_6"/>
<dbReference type="BioCyc" id="ECOL199310:C1301-MONOMER"/>
<dbReference type="Proteomes" id="UP000001410">
    <property type="component" value="Chromosome"/>
</dbReference>
<dbReference type="InterPro" id="IPR018900">
    <property type="entry name" value="Curli_CsgE"/>
</dbReference>
<dbReference type="NCBIfam" id="NF007701">
    <property type="entry name" value="PRK10386.1"/>
    <property type="match status" value="1"/>
</dbReference>
<dbReference type="Pfam" id="PF10627">
    <property type="entry name" value="CsgE"/>
    <property type="match status" value="1"/>
</dbReference>
<keyword id="KW-1185">Reference proteome</keyword>
<keyword id="KW-0732">Signal</keyword>
<protein>
    <recommendedName>
        <fullName>Curli production assembly/transport component CsgE</fullName>
    </recommendedName>
</protein>
<organism>
    <name type="scientific">Escherichia coli O6:H1 (strain CFT073 / ATCC 700928 / UPEC)</name>
    <dbReference type="NCBI Taxonomy" id="199310"/>
    <lineage>
        <taxon>Bacteria</taxon>
        <taxon>Pseudomonadati</taxon>
        <taxon>Pseudomonadota</taxon>
        <taxon>Gammaproteobacteria</taxon>
        <taxon>Enterobacterales</taxon>
        <taxon>Enterobacteriaceae</taxon>
        <taxon>Escherichia</taxon>
    </lineage>
</organism>
<feature type="signal peptide" evidence="2">
    <location>
        <begin position="1"/>
        <end position="22"/>
    </location>
</feature>
<feature type="chain" id="PRO_0000043385" description="Curli production assembly/transport component CsgE">
    <location>
        <begin position="23"/>
        <end position="129"/>
    </location>
</feature>
<reference key="1">
    <citation type="journal article" date="2002" name="Proc. Natl. Acad. Sci. U.S.A.">
        <title>Extensive mosaic structure revealed by the complete genome sequence of uropathogenic Escherichia coli.</title>
        <authorList>
            <person name="Welch R.A."/>
            <person name="Burland V."/>
            <person name="Plunkett G. III"/>
            <person name="Redford P."/>
            <person name="Roesch P."/>
            <person name="Rasko D."/>
            <person name="Buckles E.L."/>
            <person name="Liou S.-R."/>
            <person name="Boutin A."/>
            <person name="Hackett J."/>
            <person name="Stroud D."/>
            <person name="Mayhew G.F."/>
            <person name="Rose D.J."/>
            <person name="Zhou S."/>
            <person name="Schwartz D.C."/>
            <person name="Perna N.T."/>
            <person name="Mobley H.L.T."/>
            <person name="Donnenberg M.S."/>
            <person name="Blattner F.R."/>
        </authorList>
    </citation>
    <scope>NUCLEOTIDE SEQUENCE [LARGE SCALE GENOMIC DNA]</scope>
    <source>
        <strain>CFT073 / ATCC 700928 / UPEC</strain>
    </source>
</reference>
<comment type="function">
    <text evidence="1">May be involved in the biogenesis of curli organelles.</text>
</comment>
<evidence type="ECO:0000250" key="1"/>
<evidence type="ECO:0000255" key="2"/>